<sequence length="161" mass="17525">MKDLLPDLCDLYPEKLQIAEPIFTSYGKRSHFYGEVVTVSCFEDNSRVRELVAENGKGKVMVIDGGGSKRRALLGDMLAEKAVDNGWEGFVINGAIRDIAAQSQLNIGIHALCAHPMPTEKRGLGDLGKTLRFAGMTIAQGDYIYCDLNGIVVSKQPLALP</sequence>
<feature type="chain" id="PRO_1000081208" description="Putative 4-hydroxy-4-methyl-2-oxoglutarate aldolase">
    <location>
        <begin position="1"/>
        <end position="161"/>
    </location>
</feature>
<feature type="binding site" evidence="1">
    <location>
        <begin position="75"/>
        <end position="78"/>
    </location>
    <ligand>
        <name>substrate</name>
    </ligand>
</feature>
<feature type="binding site" evidence="1">
    <location>
        <position position="97"/>
    </location>
    <ligand>
        <name>substrate</name>
    </ligand>
</feature>
<feature type="binding site" evidence="1">
    <location>
        <position position="98"/>
    </location>
    <ligand>
        <name>a divalent metal cation</name>
        <dbReference type="ChEBI" id="CHEBI:60240"/>
    </ligand>
</feature>
<evidence type="ECO:0000250" key="1"/>
<evidence type="ECO:0000305" key="2"/>
<name>RRAAH_MARMS</name>
<keyword id="KW-0456">Lyase</keyword>
<keyword id="KW-0479">Metal-binding</keyword>
<dbReference type="EC" id="4.1.3.17"/>
<dbReference type="EC" id="4.1.1.112"/>
<dbReference type="EMBL" id="CP000749">
    <property type="protein sequence ID" value="ABR70993.1"/>
    <property type="molecule type" value="Genomic_DNA"/>
</dbReference>
<dbReference type="SMR" id="A6VX14"/>
<dbReference type="STRING" id="400668.Mmwyl1_2071"/>
<dbReference type="KEGG" id="mmw:Mmwyl1_2071"/>
<dbReference type="eggNOG" id="COG0684">
    <property type="taxonomic scope" value="Bacteria"/>
</dbReference>
<dbReference type="HOGENOM" id="CLU_072626_4_0_6"/>
<dbReference type="OrthoDB" id="943692at2"/>
<dbReference type="GO" id="GO:0047443">
    <property type="term" value="F:4-hydroxy-4-methyl-2-oxoglutarate aldolase activity"/>
    <property type="evidence" value="ECO:0007669"/>
    <property type="project" value="UniProtKB-EC"/>
</dbReference>
<dbReference type="GO" id="GO:0046872">
    <property type="term" value="F:metal ion binding"/>
    <property type="evidence" value="ECO:0007669"/>
    <property type="project" value="UniProtKB-KW"/>
</dbReference>
<dbReference type="GO" id="GO:0008948">
    <property type="term" value="F:oxaloacetate decarboxylase activity"/>
    <property type="evidence" value="ECO:0007669"/>
    <property type="project" value="UniProtKB-EC"/>
</dbReference>
<dbReference type="GO" id="GO:0008428">
    <property type="term" value="F:ribonuclease inhibitor activity"/>
    <property type="evidence" value="ECO:0007669"/>
    <property type="project" value="InterPro"/>
</dbReference>
<dbReference type="GO" id="GO:0051252">
    <property type="term" value="P:regulation of RNA metabolic process"/>
    <property type="evidence" value="ECO:0007669"/>
    <property type="project" value="InterPro"/>
</dbReference>
<dbReference type="CDD" id="cd16841">
    <property type="entry name" value="RraA_family"/>
    <property type="match status" value="1"/>
</dbReference>
<dbReference type="Gene3D" id="3.50.30.40">
    <property type="entry name" value="Ribonuclease E inhibitor RraA/RraA-like"/>
    <property type="match status" value="1"/>
</dbReference>
<dbReference type="InterPro" id="IPR010203">
    <property type="entry name" value="RraA"/>
</dbReference>
<dbReference type="InterPro" id="IPR005493">
    <property type="entry name" value="RraA/RraA-like"/>
</dbReference>
<dbReference type="InterPro" id="IPR036704">
    <property type="entry name" value="RraA/RraA-like_sf"/>
</dbReference>
<dbReference type="NCBIfam" id="TIGR01935">
    <property type="entry name" value="NOT-MenG"/>
    <property type="match status" value="1"/>
</dbReference>
<dbReference type="NCBIfam" id="NF006875">
    <property type="entry name" value="PRK09372.1"/>
    <property type="match status" value="1"/>
</dbReference>
<dbReference type="NCBIfam" id="NF009134">
    <property type="entry name" value="PRK12487.1"/>
    <property type="match status" value="1"/>
</dbReference>
<dbReference type="PANTHER" id="PTHR33254">
    <property type="entry name" value="4-HYDROXY-4-METHYL-2-OXOGLUTARATE ALDOLASE 3-RELATED"/>
    <property type="match status" value="1"/>
</dbReference>
<dbReference type="PANTHER" id="PTHR33254:SF29">
    <property type="entry name" value="REGULATOR OF RIBONUCLEASE ACTIVITY A"/>
    <property type="match status" value="1"/>
</dbReference>
<dbReference type="Pfam" id="PF03737">
    <property type="entry name" value="RraA-like"/>
    <property type="match status" value="1"/>
</dbReference>
<dbReference type="SUPFAM" id="SSF89562">
    <property type="entry name" value="RraA-like"/>
    <property type="match status" value="1"/>
</dbReference>
<gene>
    <name type="ordered locus">Mmwyl1_2071</name>
</gene>
<protein>
    <recommendedName>
        <fullName>Putative 4-hydroxy-4-methyl-2-oxoglutarate aldolase</fullName>
        <shortName>HMG aldolase</shortName>
        <ecNumber>4.1.3.17</ecNumber>
    </recommendedName>
    <alternativeName>
        <fullName>Oxaloacetate decarboxylase</fullName>
        <shortName>OAA decarboxylase</shortName>
        <ecNumber>4.1.1.112</ecNumber>
    </alternativeName>
    <alternativeName>
        <fullName>Regulator of ribonuclease activity homolog</fullName>
    </alternativeName>
    <alternativeName>
        <fullName>RraA-like protein</fullName>
    </alternativeName>
</protein>
<proteinExistence type="inferred from homology"/>
<reference key="1">
    <citation type="submission" date="2007-06" db="EMBL/GenBank/DDBJ databases">
        <title>Complete sequence of Marinomonas sp. MWYL1.</title>
        <authorList>
            <consortium name="US DOE Joint Genome Institute"/>
            <person name="Copeland A."/>
            <person name="Lucas S."/>
            <person name="Lapidus A."/>
            <person name="Barry K."/>
            <person name="Glavina del Rio T."/>
            <person name="Dalin E."/>
            <person name="Tice H."/>
            <person name="Pitluck S."/>
            <person name="Kiss H."/>
            <person name="Brettin T."/>
            <person name="Bruce D."/>
            <person name="Detter J.C."/>
            <person name="Han C."/>
            <person name="Schmutz J."/>
            <person name="Larimer F."/>
            <person name="Land M."/>
            <person name="Hauser L."/>
            <person name="Kyrpides N."/>
            <person name="Kim E."/>
            <person name="Johnston A.W.B."/>
            <person name="Todd J.D."/>
            <person name="Rogers R."/>
            <person name="Wexler M."/>
            <person name="Bond P.L."/>
            <person name="Li Y."/>
            <person name="Richardson P."/>
        </authorList>
    </citation>
    <scope>NUCLEOTIDE SEQUENCE [LARGE SCALE GENOMIC DNA]</scope>
    <source>
        <strain>MWYL1</strain>
    </source>
</reference>
<comment type="function">
    <text evidence="1">Catalyzes the aldol cleavage of 4-hydroxy-4-methyl-2-oxoglutarate (HMG) into 2 molecules of pyruvate. Also contains a secondary oxaloacetate (OAA) decarboxylase activity due to the common pyruvate enolate transition state formed following C-C bond cleavage in the retro-aldol and decarboxylation reactions (By similarity).</text>
</comment>
<comment type="catalytic activity">
    <reaction>
        <text>4-hydroxy-4-methyl-2-oxoglutarate = 2 pyruvate</text>
        <dbReference type="Rhea" id="RHEA:22748"/>
        <dbReference type="ChEBI" id="CHEBI:15361"/>
        <dbReference type="ChEBI" id="CHEBI:58276"/>
        <dbReference type="EC" id="4.1.3.17"/>
    </reaction>
</comment>
<comment type="catalytic activity">
    <reaction>
        <text>oxaloacetate + H(+) = pyruvate + CO2</text>
        <dbReference type="Rhea" id="RHEA:15641"/>
        <dbReference type="ChEBI" id="CHEBI:15361"/>
        <dbReference type="ChEBI" id="CHEBI:15378"/>
        <dbReference type="ChEBI" id="CHEBI:16452"/>
        <dbReference type="ChEBI" id="CHEBI:16526"/>
        <dbReference type="EC" id="4.1.1.112"/>
    </reaction>
</comment>
<comment type="cofactor">
    <cofactor evidence="1">
        <name>a divalent metal cation</name>
        <dbReference type="ChEBI" id="CHEBI:60240"/>
    </cofactor>
    <text evidence="1">Divalent metal cation.</text>
</comment>
<comment type="subunit">
    <text evidence="1">Homotrimer.</text>
</comment>
<comment type="similarity">
    <text evidence="2">Belongs to the class II aldolase/RraA-like family.</text>
</comment>
<accession>A6VX14</accession>
<organism>
    <name type="scientific">Marinomonas sp. (strain MWYL1)</name>
    <dbReference type="NCBI Taxonomy" id="400668"/>
    <lineage>
        <taxon>Bacteria</taxon>
        <taxon>Pseudomonadati</taxon>
        <taxon>Pseudomonadota</taxon>
        <taxon>Gammaproteobacteria</taxon>
        <taxon>Oceanospirillales</taxon>
        <taxon>Oceanospirillaceae</taxon>
        <taxon>Marinomonas</taxon>
    </lineage>
</organism>